<sequence length="526" mass="60469">MYYRSIKSEIIQTICTYHEEPSLIFNKICRTKTETLLLESATVHGKKNIESMLIIDTAIKISCFKNIVEIEAISNNGLFLLNTIDLKILKKKSTKIKKKKSNVLEIHFPIFNYFTDEDKKLFLTSVFDALRIIKKSIKNPEKSKMGVFFGGILSYDLISSFEPIPRVFNSKYNHPDFCFYLSENLLIFDHKKKKCKLQTNIFTDNEEEKLNILKRIKIIYNQIKEINSKKKNNRINTFNDFKTKNKKWVDCKNDSKVYKNKVKKMKQMILNGEVFQIVISRKFFLPCPYPLESYIFLKKNNPSPYMFFMQDRHFVLFGASPESSLKFSSITRKIEIHPIAGTRPRAFSSIKKIDINEDNKMELAMRINSKELAEHCMLVDLARNDLSRICLPGSRVVSDLMKVVKYSHVMHLVSKVEGVLRNDLDIFHAYQCCMNMGTLTGAPKIRAMQIIAEEGEIRECYGGAIGYFTGKGDLDTCIVIRSAYVRNGIACVQAGAGIVLDSIADEENEECKNKAMAVINAINKTL</sequence>
<accession>Q9ZES2</accession>
<keyword id="KW-0028">Amino-acid biosynthesis</keyword>
<keyword id="KW-0057">Aromatic amino acid biosynthesis</keyword>
<keyword id="KW-0456">Lyase</keyword>
<keyword id="KW-0460">Magnesium</keyword>
<keyword id="KW-0479">Metal-binding</keyword>
<keyword id="KW-0614">Plasmid</keyword>
<keyword id="KW-0822">Tryptophan biosynthesis</keyword>
<proteinExistence type="inferred from homology"/>
<feature type="chain" id="PRO_0000154088" description="Anthranilate synthase component 1">
    <location>
        <begin position="1"/>
        <end position="526"/>
    </location>
</feature>
<feature type="binding site" evidence="2">
    <location>
        <position position="40"/>
    </location>
    <ligand>
        <name>L-tryptophan</name>
        <dbReference type="ChEBI" id="CHEBI:57912"/>
    </ligand>
</feature>
<feature type="binding site" evidence="2">
    <location>
        <begin position="304"/>
        <end position="306"/>
    </location>
    <ligand>
        <name>L-tryptophan</name>
        <dbReference type="ChEBI" id="CHEBI:57912"/>
    </ligand>
</feature>
<feature type="binding site" evidence="2">
    <location>
        <begin position="341"/>
        <end position="342"/>
    </location>
    <ligand>
        <name>chorismate</name>
        <dbReference type="ChEBI" id="CHEBI:29748"/>
    </ligand>
</feature>
<feature type="binding site" evidence="2">
    <location>
        <position position="374"/>
    </location>
    <ligand>
        <name>Mg(2+)</name>
        <dbReference type="ChEBI" id="CHEBI:18420"/>
    </ligand>
</feature>
<feature type="binding site" evidence="2">
    <location>
        <position position="461"/>
    </location>
    <ligand>
        <name>chorismate</name>
        <dbReference type="ChEBI" id="CHEBI:29748"/>
    </ligand>
</feature>
<feature type="binding site" evidence="2">
    <location>
        <position position="481"/>
    </location>
    <ligand>
        <name>chorismate</name>
        <dbReference type="ChEBI" id="CHEBI:29748"/>
    </ligand>
</feature>
<feature type="binding site" evidence="2">
    <location>
        <begin position="495"/>
        <end position="497"/>
    </location>
    <ligand>
        <name>chorismate</name>
        <dbReference type="ChEBI" id="CHEBI:29748"/>
    </ligand>
</feature>
<feature type="binding site" evidence="2">
    <location>
        <position position="497"/>
    </location>
    <ligand>
        <name>chorismate</name>
        <dbReference type="ChEBI" id="CHEBI:29748"/>
    </ligand>
</feature>
<feature type="binding site" evidence="2">
    <location>
        <position position="510"/>
    </location>
    <ligand>
        <name>Mg(2+)</name>
        <dbReference type="ChEBI" id="CHEBI:18420"/>
    </ligand>
</feature>
<reference key="1">
    <citation type="journal article" date="1999" name="Appl. Environ. Microbiol.">
        <title>Plasmid-encoded anthranilate synthase (TrpEG) in Buchnera aphidicola from aphids of the family pemphigidae.</title>
        <authorList>
            <person name="van Ham R.C.H.J."/>
            <person name="Martinez-Torres D."/>
            <person name="Moya A."/>
            <person name="Latorre A."/>
        </authorList>
    </citation>
    <scope>NUCLEOTIDE SEQUENCE [GENOMIC DNA]</scope>
</reference>
<comment type="function">
    <text evidence="1">Part of a heterotetrameric complex that catalyzes the two-step biosynthesis of anthranilate, an intermediate in the biosynthesis of L-tryptophan. In the first step, the glutamine-binding beta subunit (TrpG) of anthranilate synthase (AS) provides the glutamine amidotransferase activity which generates ammonia as a substrate that, along with chorismate, is used in the second step, catalyzed by the large alpha subunit of AS (TrpE) to produce anthranilate. In the absence of TrpG, TrpE can synthesize anthranilate directly from chorismate and high concentrations of ammonia (By similarity).</text>
</comment>
<comment type="catalytic activity">
    <reaction>
        <text>chorismate + L-glutamine = anthranilate + pyruvate + L-glutamate + H(+)</text>
        <dbReference type="Rhea" id="RHEA:21732"/>
        <dbReference type="ChEBI" id="CHEBI:15361"/>
        <dbReference type="ChEBI" id="CHEBI:15378"/>
        <dbReference type="ChEBI" id="CHEBI:16567"/>
        <dbReference type="ChEBI" id="CHEBI:29748"/>
        <dbReference type="ChEBI" id="CHEBI:29985"/>
        <dbReference type="ChEBI" id="CHEBI:58359"/>
        <dbReference type="EC" id="4.1.3.27"/>
    </reaction>
</comment>
<comment type="cofactor">
    <cofactor evidence="2">
        <name>Mg(2+)</name>
        <dbReference type="ChEBI" id="CHEBI:18420"/>
    </cofactor>
    <text evidence="2">Binds 1 Mg(2+) ion per subunit.</text>
</comment>
<comment type="activity regulation">
    <text evidence="1">Feedback inhibited by tryptophan.</text>
</comment>
<comment type="pathway">
    <text>Amino-acid biosynthesis; L-tryptophan biosynthesis; L-tryptophan from chorismate: step 1/5.</text>
</comment>
<comment type="subunit">
    <text evidence="1">Heterotetramer consisting of two non-identical subunits: a beta subunit (TrpG) and a large alpha subunit (TrpE).</text>
</comment>
<comment type="similarity">
    <text evidence="3">Belongs to the anthranilate synthase component I family.</text>
</comment>
<geneLocation type="plasmid">
    <name>pBTc2</name>
</geneLocation>
<evidence type="ECO:0000250" key="1"/>
<evidence type="ECO:0000250" key="2">
    <source>
        <dbReference type="UniProtKB" id="P00897"/>
    </source>
</evidence>
<evidence type="ECO:0000305" key="3"/>
<dbReference type="EC" id="4.1.3.27"/>
<dbReference type="EMBL" id="AJ012333">
    <property type="protein sequence ID" value="CAA09993.1"/>
    <property type="molecule type" value="Genomic_DNA"/>
</dbReference>
<dbReference type="RefSeq" id="YP_009062867.1">
    <property type="nucleotide sequence ID" value="NC_025017.1"/>
</dbReference>
<dbReference type="SMR" id="Q9ZES2"/>
<dbReference type="UniPathway" id="UPA00035">
    <property type="reaction ID" value="UER00040"/>
</dbReference>
<dbReference type="GO" id="GO:0004049">
    <property type="term" value="F:anthranilate synthase activity"/>
    <property type="evidence" value="ECO:0007669"/>
    <property type="project" value="UniProtKB-EC"/>
</dbReference>
<dbReference type="GO" id="GO:0046872">
    <property type="term" value="F:metal ion binding"/>
    <property type="evidence" value="ECO:0007669"/>
    <property type="project" value="UniProtKB-KW"/>
</dbReference>
<dbReference type="GO" id="GO:0000162">
    <property type="term" value="P:L-tryptophan biosynthetic process"/>
    <property type="evidence" value="ECO:0007669"/>
    <property type="project" value="UniProtKB-UniPathway"/>
</dbReference>
<dbReference type="Gene3D" id="3.60.120.10">
    <property type="entry name" value="Anthranilate synthase"/>
    <property type="match status" value="1"/>
</dbReference>
<dbReference type="InterPro" id="IPR005801">
    <property type="entry name" value="ADC_synthase"/>
</dbReference>
<dbReference type="InterPro" id="IPR019999">
    <property type="entry name" value="Anth_synth_I-like"/>
</dbReference>
<dbReference type="InterPro" id="IPR006805">
    <property type="entry name" value="Anth_synth_I_N"/>
</dbReference>
<dbReference type="InterPro" id="IPR005257">
    <property type="entry name" value="Anth_synth_I_TrpE"/>
</dbReference>
<dbReference type="InterPro" id="IPR015890">
    <property type="entry name" value="Chorismate_C"/>
</dbReference>
<dbReference type="NCBIfam" id="NF010079">
    <property type="entry name" value="PRK13564.1"/>
    <property type="match status" value="1"/>
</dbReference>
<dbReference type="NCBIfam" id="TIGR00565">
    <property type="entry name" value="trpE_proteo"/>
    <property type="match status" value="1"/>
</dbReference>
<dbReference type="PANTHER" id="PTHR11236">
    <property type="entry name" value="AMINOBENZOATE/ANTHRANILATE SYNTHASE"/>
    <property type="match status" value="1"/>
</dbReference>
<dbReference type="PANTHER" id="PTHR11236:SF49">
    <property type="entry name" value="ANTHRANILATE SYNTHASE COMPONENT 1"/>
    <property type="match status" value="1"/>
</dbReference>
<dbReference type="Pfam" id="PF04715">
    <property type="entry name" value="Anth_synt_I_N"/>
    <property type="match status" value="1"/>
</dbReference>
<dbReference type="Pfam" id="PF00425">
    <property type="entry name" value="Chorismate_bind"/>
    <property type="match status" value="1"/>
</dbReference>
<dbReference type="PIRSF" id="PIRSF001373">
    <property type="entry name" value="TrpE"/>
    <property type="match status" value="1"/>
</dbReference>
<dbReference type="PRINTS" id="PR00095">
    <property type="entry name" value="ANTSNTHASEI"/>
</dbReference>
<dbReference type="SUPFAM" id="SSF56322">
    <property type="entry name" value="ADC synthase"/>
    <property type="match status" value="1"/>
</dbReference>
<protein>
    <recommendedName>
        <fullName>Anthranilate synthase component 1</fullName>
        <shortName>AS</shortName>
        <shortName>ASI</shortName>
        <ecNumber>4.1.3.27</ecNumber>
    </recommendedName>
</protein>
<organism>
    <name type="scientific">Buchnera aphidicola subsp. Tetraneura caerulescens</name>
    <dbReference type="NCBI Taxonomy" id="118111"/>
    <lineage>
        <taxon>Bacteria</taxon>
        <taxon>Pseudomonadati</taxon>
        <taxon>Pseudomonadota</taxon>
        <taxon>Gammaproteobacteria</taxon>
        <taxon>Enterobacterales</taxon>
        <taxon>Erwiniaceae</taxon>
        <taxon>Buchnera</taxon>
    </lineage>
</organism>
<name>TRPE_BUCTC</name>
<gene>
    <name type="primary">trpE</name>
</gene>